<sequence>MAAKVARLAAAASSLPFVCAVYAEEKESKSQLVKPKQLPIYCLPPLKSKYIEEQPGRLQKQFSSIRQTTGRYIGWCKDAFFFAKNGIVDSIQFGKDAYVYLKNPPPDFLPRVGIITISGLAGVVLARKDSRFKKIAYPLGLTTLGISVCYPAQAVVIAKITGKKVISASHQTYEAVRSLWTKKEDASKLQQESKSVTQENKKNREISNVQFESAIESRSSNRTESSPIESWSTKDPLPSSGTVKTTKFKPDPKLMDHGQSSPEDVDMYSTRS</sequence>
<accession>Q5ZK55</accession>
<reference key="1">
    <citation type="journal article" date="2005" name="Genome Biol.">
        <title>Full-length cDNAs from chicken bursal lymphocytes to facilitate gene function analysis.</title>
        <authorList>
            <person name="Caldwell R.B."/>
            <person name="Kierzek A.M."/>
            <person name="Arakawa H."/>
            <person name="Bezzubov Y."/>
            <person name="Zaim J."/>
            <person name="Fiedler P."/>
            <person name="Kutter S."/>
            <person name="Blagodatski A."/>
            <person name="Kostovska D."/>
            <person name="Koter M."/>
            <person name="Plachy J."/>
            <person name="Carninci P."/>
            <person name="Hayashizaki Y."/>
            <person name="Buerstedde J.-M."/>
        </authorList>
    </citation>
    <scope>NUCLEOTIDE SEQUENCE [LARGE SCALE MRNA]</scope>
    <source>
        <strain>CB</strain>
        <tissue>Bursa of Fabricius</tissue>
    </source>
</reference>
<keyword id="KW-0472">Membrane</keyword>
<keyword id="KW-0496">Mitochondrion</keyword>
<keyword id="KW-0999">Mitochondrion inner membrane</keyword>
<keyword id="KW-1185">Reference proteome</keyword>
<keyword id="KW-0809">Transit peptide</keyword>
<keyword id="KW-0812">Transmembrane</keyword>
<keyword id="KW-1133">Transmembrane helix</keyword>
<dbReference type="EMBL" id="AJ720229">
    <property type="protein sequence ID" value="CAG31888.1"/>
    <property type="molecule type" value="mRNA"/>
</dbReference>
<dbReference type="RefSeq" id="NP_001006434.1">
    <property type="nucleotide sequence ID" value="NM_001006434.2"/>
</dbReference>
<dbReference type="FunCoup" id="Q5ZK55">
    <property type="interactions" value="1795"/>
</dbReference>
<dbReference type="STRING" id="9031.ENSGALP00000049719"/>
<dbReference type="PaxDb" id="9031-ENSGALP00000011291"/>
<dbReference type="GeneID" id="422271"/>
<dbReference type="KEGG" id="gga:422271"/>
<dbReference type="CTD" id="139322"/>
<dbReference type="VEuPathDB" id="HostDB:geneid_422271"/>
<dbReference type="eggNOG" id="KOG4798">
    <property type="taxonomic scope" value="Eukaryota"/>
</dbReference>
<dbReference type="InParanoid" id="Q5ZK55"/>
<dbReference type="OrthoDB" id="5973346at2759"/>
<dbReference type="PhylomeDB" id="Q5ZK55"/>
<dbReference type="PRO" id="PR:Q5ZK55"/>
<dbReference type="Proteomes" id="UP000000539">
    <property type="component" value="Unassembled WGS sequence"/>
</dbReference>
<dbReference type="GO" id="GO:0061617">
    <property type="term" value="C:MICOS complex"/>
    <property type="evidence" value="ECO:0000318"/>
    <property type="project" value="GO_Central"/>
</dbReference>
<dbReference type="GO" id="GO:0042407">
    <property type="term" value="P:cristae formation"/>
    <property type="evidence" value="ECO:0000318"/>
    <property type="project" value="GO_Central"/>
</dbReference>
<dbReference type="InterPro" id="IPR019166">
    <property type="entry name" value="MIC26/MIC27"/>
</dbReference>
<dbReference type="InterPro" id="IPR033182">
    <property type="entry name" value="MIC26/MIC27_animal"/>
</dbReference>
<dbReference type="PANTHER" id="PTHR14564">
    <property type="entry name" value="MICOS COMPLEX SUBUNIT MIC26 / MIC27 FAMILY MEMBER"/>
    <property type="match status" value="1"/>
</dbReference>
<dbReference type="Pfam" id="PF09769">
    <property type="entry name" value="ApoO"/>
    <property type="match status" value="1"/>
</dbReference>
<gene>
    <name type="primary">APOOL</name>
    <name type="synonym">FAM121A</name>
    <name type="synonym">MIC27</name>
    <name type="ORF">RCJMB04_13b18</name>
</gene>
<protein>
    <recommendedName>
        <fullName>MICOS complex subunit MIC27</fullName>
    </recommendedName>
    <alternativeName>
        <fullName>Apolipoprotein O-like</fullName>
    </alternativeName>
    <alternativeName>
        <fullName>Protein FAM121A</fullName>
    </alternativeName>
</protein>
<proteinExistence type="evidence at transcript level"/>
<comment type="function">
    <text evidence="1">Component of the MICOS complex, a large protein complex of the mitochondrial inner membrane that plays crucial roles in the maintenance of crista junctions, inner membrane architecture, and formation of contact sites to the outer membrane.</text>
</comment>
<comment type="subunit">
    <text evidence="1">Component of the mitochondrial contact site and cristae organizing system (MICOS) complex (also known as MINOS or MitOS complex).</text>
</comment>
<comment type="subcellular location">
    <subcellularLocation>
        <location evidence="1">Mitochondrion inner membrane</location>
        <topology evidence="1">Multi-pass membrane protein</topology>
    </subcellularLocation>
</comment>
<comment type="similarity">
    <text evidence="4">Belongs to the apolipoprotein O/MICOS complex subunit Mic27 family.</text>
</comment>
<evidence type="ECO:0000250" key="1">
    <source>
        <dbReference type="UniProtKB" id="Q6UXV4"/>
    </source>
</evidence>
<evidence type="ECO:0000255" key="2"/>
<evidence type="ECO:0000256" key="3">
    <source>
        <dbReference type="SAM" id="MobiDB-lite"/>
    </source>
</evidence>
<evidence type="ECO:0000305" key="4"/>
<name>MIC27_CHICK</name>
<feature type="transit peptide" description="Mitochondrion" evidence="2">
    <location>
        <begin position="1"/>
        <end position="24"/>
    </location>
</feature>
<feature type="chain" id="PRO_0000254644" description="MICOS complex subunit MIC27">
    <location>
        <begin position="25"/>
        <end position="272"/>
    </location>
</feature>
<feature type="topological domain" description="Mitochondrial intermembrane" evidence="2">
    <location>
        <begin position="28"/>
        <end position="107"/>
    </location>
</feature>
<feature type="transmembrane region" description="Helical" evidence="2">
    <location>
        <begin position="108"/>
        <end position="126"/>
    </location>
</feature>
<feature type="topological domain" description="Mitochondrial matrix" evidence="2">
    <location>
        <begin position="127"/>
        <end position="134"/>
    </location>
</feature>
<feature type="transmembrane region" description="Helical" evidence="2">
    <location>
        <begin position="135"/>
        <end position="152"/>
    </location>
</feature>
<feature type="topological domain" description="Mitochondrial intermembrane" evidence="2">
    <location>
        <begin position="153"/>
        <end position="272"/>
    </location>
</feature>
<feature type="region of interest" description="Disordered" evidence="3">
    <location>
        <begin position="187"/>
        <end position="272"/>
    </location>
</feature>
<feature type="compositionally biased region" description="Polar residues" evidence="3">
    <location>
        <begin position="188"/>
        <end position="198"/>
    </location>
</feature>
<feature type="compositionally biased region" description="Polar residues" evidence="3">
    <location>
        <begin position="206"/>
        <end position="245"/>
    </location>
</feature>
<organism>
    <name type="scientific">Gallus gallus</name>
    <name type="common">Chicken</name>
    <dbReference type="NCBI Taxonomy" id="9031"/>
    <lineage>
        <taxon>Eukaryota</taxon>
        <taxon>Metazoa</taxon>
        <taxon>Chordata</taxon>
        <taxon>Craniata</taxon>
        <taxon>Vertebrata</taxon>
        <taxon>Euteleostomi</taxon>
        <taxon>Archelosauria</taxon>
        <taxon>Archosauria</taxon>
        <taxon>Dinosauria</taxon>
        <taxon>Saurischia</taxon>
        <taxon>Theropoda</taxon>
        <taxon>Coelurosauria</taxon>
        <taxon>Aves</taxon>
        <taxon>Neognathae</taxon>
        <taxon>Galloanserae</taxon>
        <taxon>Galliformes</taxon>
        <taxon>Phasianidae</taxon>
        <taxon>Phasianinae</taxon>
        <taxon>Gallus</taxon>
    </lineage>
</organism>